<proteinExistence type="evidence at protein level"/>
<reference evidence="27 29" key="1">
    <citation type="journal article" date="1996" name="DNA Seq.">
        <title>DENN, a novel human gene differentially expressed in normal and neoplastic cells.</title>
        <authorList>
            <person name="Chow V.T.K."/>
            <person name="Lee S.S."/>
        </authorList>
    </citation>
    <scope>NUCLEOTIDE SEQUENCE [MRNA] (ISOFORMS 3 AND 4)</scope>
    <scope>SUBCELLULAR LOCATION</scope>
    <scope>TISSUE SPECIFICITY</scope>
    <scope>DEVELOPMENTAL STAGE</scope>
    <source>
        <tissue evidence="29">Fetal liver</tissue>
    </source>
</reference>
<reference evidence="27 28" key="2">
    <citation type="journal article" date="1997" name="J. Biol. Chem.">
        <title>MADD, a novel death domain protein that interacts with the type 1 tumor necrosis factor receptor and activates mitogen-activated protein kinase.</title>
        <authorList>
            <person name="Schievella A.R."/>
            <person name="Chen J.H."/>
            <person name="Graham J.R."/>
            <person name="Lin L.-L."/>
        </authorList>
    </citation>
    <scope>NUCLEOTIDE SEQUENCE [MRNA] (ISOFORM 3)</scope>
    <scope>FUNCTION</scope>
    <scope>INTERACTION WITH TNFRSF1A</scope>
    <scope>VARIANT MET-751</scope>
    <scope>TISSUE SPECIFICITY</scope>
</reference>
<reference evidence="27 29" key="3">
    <citation type="journal article" date="1998" name="Genome">
        <title>The human DENN gene: genomic organization, alternative splicing, and localization to chromosome 11p11.21-p11.22.</title>
        <authorList>
            <person name="Chow V.T.K."/>
            <person name="Lim K.M."/>
            <person name="Lim D."/>
        </authorList>
    </citation>
    <scope>NUCLEOTIDE SEQUENCE [MRNA] (ISOFORMS 3 AND 4)</scope>
    <scope>TISSUE SPECIFICITY</scope>
    <source>
        <tissue evidence="29">Liver</tissue>
    </source>
</reference>
<reference evidence="27 31" key="4">
    <citation type="journal article" date="2001" name="J. Biol. Chem.">
        <title>Contrasting effects of IG20 and its splice isoforms, MADD and DENN-SV, on tumor necrosis factor alpha-induced apoptosis and activation of caspase-8 and -3.</title>
        <authorList>
            <person name="Al-Zoubi A.M."/>
            <person name="Efimova E.V."/>
            <person name="Kaithamana S."/>
            <person name="Martinez O."/>
            <person name="El-Azami El-Idrissi M."/>
            <person name="Dogan R.E."/>
            <person name="Prabhakar B.S."/>
        </authorList>
    </citation>
    <scope>NUCLEOTIDE SEQUENCE [MRNA] (ISOFORMS 1; 2; 4; 5 AND 6)</scope>
    <scope>FUNCTION</scope>
    <scope>INTERACTION WITH TNFRSF1A</scope>
    <source>
        <tissue evidence="7">Insulinoma</tissue>
    </source>
</reference>
<reference evidence="27 32" key="5">
    <citation type="journal article" date="1997" name="DNA Res.">
        <title>Prediction of the coding sequences of unidentified human genes. VII. The complete sequences of 100 new cDNA clones from brain which can code for large proteins in vitro.</title>
        <authorList>
            <person name="Nagase T."/>
            <person name="Ishikawa K."/>
            <person name="Nakajima D."/>
            <person name="Ohira M."/>
            <person name="Seki N."/>
            <person name="Miyajima N."/>
            <person name="Tanaka A."/>
            <person name="Kotani H."/>
            <person name="Nomura N."/>
            <person name="Ohara O."/>
        </authorList>
    </citation>
    <scope>NUCLEOTIDE SEQUENCE [LARGE SCALE MRNA] (ISOFORM 7)</scope>
    <source>
        <tissue evidence="32">Brain</tissue>
    </source>
</reference>
<reference key="6">
    <citation type="journal article" date="2004" name="Nat. Genet.">
        <title>Complete sequencing and characterization of 21,243 full-length human cDNAs.</title>
        <authorList>
            <person name="Ota T."/>
            <person name="Suzuki Y."/>
            <person name="Nishikawa T."/>
            <person name="Otsuki T."/>
            <person name="Sugiyama T."/>
            <person name="Irie R."/>
            <person name="Wakamatsu A."/>
            <person name="Hayashi K."/>
            <person name="Sato H."/>
            <person name="Nagai K."/>
            <person name="Kimura K."/>
            <person name="Makita H."/>
            <person name="Sekine M."/>
            <person name="Obayashi M."/>
            <person name="Nishi T."/>
            <person name="Shibahara T."/>
            <person name="Tanaka T."/>
            <person name="Ishii S."/>
            <person name="Yamamoto J."/>
            <person name="Saito K."/>
            <person name="Kawai Y."/>
            <person name="Isono Y."/>
            <person name="Nakamura Y."/>
            <person name="Nagahari K."/>
            <person name="Murakami K."/>
            <person name="Yasuda T."/>
            <person name="Iwayanagi T."/>
            <person name="Wagatsuma M."/>
            <person name="Shiratori A."/>
            <person name="Sudo H."/>
            <person name="Hosoiri T."/>
            <person name="Kaku Y."/>
            <person name="Kodaira H."/>
            <person name="Kondo H."/>
            <person name="Sugawara M."/>
            <person name="Takahashi M."/>
            <person name="Kanda K."/>
            <person name="Yokoi T."/>
            <person name="Furuya T."/>
            <person name="Kikkawa E."/>
            <person name="Omura Y."/>
            <person name="Abe K."/>
            <person name="Kamihara K."/>
            <person name="Katsuta N."/>
            <person name="Sato K."/>
            <person name="Tanikawa M."/>
            <person name="Yamazaki M."/>
            <person name="Ninomiya K."/>
            <person name="Ishibashi T."/>
            <person name="Yamashita H."/>
            <person name="Murakawa K."/>
            <person name="Fujimori K."/>
            <person name="Tanai H."/>
            <person name="Kimata M."/>
            <person name="Watanabe M."/>
            <person name="Hiraoka S."/>
            <person name="Chiba Y."/>
            <person name="Ishida S."/>
            <person name="Ono Y."/>
            <person name="Takiguchi S."/>
            <person name="Watanabe S."/>
            <person name="Yosida M."/>
            <person name="Hotuta T."/>
            <person name="Kusano J."/>
            <person name="Kanehori K."/>
            <person name="Takahashi-Fujii A."/>
            <person name="Hara H."/>
            <person name="Tanase T.-O."/>
            <person name="Nomura Y."/>
            <person name="Togiya S."/>
            <person name="Komai F."/>
            <person name="Hara R."/>
            <person name="Takeuchi K."/>
            <person name="Arita M."/>
            <person name="Imose N."/>
            <person name="Musashino K."/>
            <person name="Yuuki H."/>
            <person name="Oshima A."/>
            <person name="Sasaki N."/>
            <person name="Aotsuka S."/>
            <person name="Yoshikawa Y."/>
            <person name="Matsunawa H."/>
            <person name="Ichihara T."/>
            <person name="Shiohata N."/>
            <person name="Sano S."/>
            <person name="Moriya S."/>
            <person name="Momiyama H."/>
            <person name="Satoh N."/>
            <person name="Takami S."/>
            <person name="Terashima Y."/>
            <person name="Suzuki O."/>
            <person name="Nakagawa S."/>
            <person name="Senoh A."/>
            <person name="Mizoguchi H."/>
            <person name="Goto Y."/>
            <person name="Shimizu F."/>
            <person name="Wakebe H."/>
            <person name="Hishigaki H."/>
            <person name="Watanabe T."/>
            <person name="Sugiyama A."/>
            <person name="Takemoto M."/>
            <person name="Kawakami B."/>
            <person name="Yamazaki M."/>
            <person name="Watanabe K."/>
            <person name="Kumagai A."/>
            <person name="Itakura S."/>
            <person name="Fukuzumi Y."/>
            <person name="Fujimori Y."/>
            <person name="Komiyama M."/>
            <person name="Tashiro H."/>
            <person name="Tanigami A."/>
            <person name="Fujiwara T."/>
            <person name="Ono T."/>
            <person name="Yamada K."/>
            <person name="Fujii Y."/>
            <person name="Ozaki K."/>
            <person name="Hirao M."/>
            <person name="Ohmori Y."/>
            <person name="Kawabata A."/>
            <person name="Hikiji T."/>
            <person name="Kobatake N."/>
            <person name="Inagaki H."/>
            <person name="Ikema Y."/>
            <person name="Okamoto S."/>
            <person name="Okitani R."/>
            <person name="Kawakami T."/>
            <person name="Noguchi S."/>
            <person name="Itoh T."/>
            <person name="Shigeta K."/>
            <person name="Senba T."/>
            <person name="Matsumura K."/>
            <person name="Nakajima Y."/>
            <person name="Mizuno T."/>
            <person name="Morinaga M."/>
            <person name="Sasaki M."/>
            <person name="Togashi T."/>
            <person name="Oyama M."/>
            <person name="Hata H."/>
            <person name="Watanabe M."/>
            <person name="Komatsu T."/>
            <person name="Mizushima-Sugano J."/>
            <person name="Satoh T."/>
            <person name="Shirai Y."/>
            <person name="Takahashi Y."/>
            <person name="Nakagawa K."/>
            <person name="Okumura K."/>
            <person name="Nagase T."/>
            <person name="Nomura N."/>
            <person name="Kikuchi H."/>
            <person name="Masuho Y."/>
            <person name="Yamashita R."/>
            <person name="Nakai K."/>
            <person name="Yada T."/>
            <person name="Nakamura Y."/>
            <person name="Ohara O."/>
            <person name="Isogai T."/>
            <person name="Sugano S."/>
        </authorList>
    </citation>
    <scope>NUCLEOTIDE SEQUENCE [LARGE SCALE MRNA] (ISOFORM 8)</scope>
    <source>
        <tissue>Testis</tissue>
    </source>
</reference>
<reference key="7">
    <citation type="journal article" date="2006" name="Nature">
        <title>Human chromosome 11 DNA sequence and analysis including novel gene identification.</title>
        <authorList>
            <person name="Taylor T.D."/>
            <person name="Noguchi H."/>
            <person name="Totoki Y."/>
            <person name="Toyoda A."/>
            <person name="Kuroki Y."/>
            <person name="Dewar K."/>
            <person name="Lloyd C."/>
            <person name="Itoh T."/>
            <person name="Takeda T."/>
            <person name="Kim D.-W."/>
            <person name="She X."/>
            <person name="Barlow K.F."/>
            <person name="Bloom T."/>
            <person name="Bruford E."/>
            <person name="Chang J.L."/>
            <person name="Cuomo C.A."/>
            <person name="Eichler E."/>
            <person name="FitzGerald M.G."/>
            <person name="Jaffe D.B."/>
            <person name="LaButti K."/>
            <person name="Nicol R."/>
            <person name="Park H.-S."/>
            <person name="Seaman C."/>
            <person name="Sougnez C."/>
            <person name="Yang X."/>
            <person name="Zimmer A.R."/>
            <person name="Zody M.C."/>
            <person name="Birren B.W."/>
            <person name="Nusbaum C."/>
            <person name="Fujiyama A."/>
            <person name="Hattori M."/>
            <person name="Rogers J."/>
            <person name="Lander E.S."/>
            <person name="Sakaki Y."/>
        </authorList>
    </citation>
    <scope>NUCLEOTIDE SEQUENCE [LARGE SCALE GENOMIC DNA]</scope>
</reference>
<reference key="8">
    <citation type="submission" date="2005-09" db="EMBL/GenBank/DDBJ databases">
        <authorList>
            <person name="Mural R.J."/>
            <person name="Istrail S."/>
            <person name="Sutton G.G."/>
            <person name="Florea L."/>
            <person name="Halpern A.L."/>
            <person name="Mobarry C.M."/>
            <person name="Lippert R."/>
            <person name="Walenz B."/>
            <person name="Shatkay H."/>
            <person name="Dew I."/>
            <person name="Miller J.R."/>
            <person name="Flanigan M.J."/>
            <person name="Edwards N.J."/>
            <person name="Bolanos R."/>
            <person name="Fasulo D."/>
            <person name="Halldorsson B.V."/>
            <person name="Hannenhalli S."/>
            <person name="Turner R."/>
            <person name="Yooseph S."/>
            <person name="Lu F."/>
            <person name="Nusskern D.R."/>
            <person name="Shue B.C."/>
            <person name="Zheng X.H."/>
            <person name="Zhong F."/>
            <person name="Delcher A.L."/>
            <person name="Huson D.H."/>
            <person name="Kravitz S.A."/>
            <person name="Mouchard L."/>
            <person name="Reinert K."/>
            <person name="Remington K.A."/>
            <person name="Clark A.G."/>
            <person name="Waterman M.S."/>
            <person name="Eichler E.E."/>
            <person name="Adams M.D."/>
            <person name="Hunkapiller M.W."/>
            <person name="Myers E.W."/>
            <person name="Venter J.C."/>
        </authorList>
    </citation>
    <scope>NUCLEOTIDE SEQUENCE [LARGE SCALE GENOMIC DNA]</scope>
</reference>
<reference evidence="27 30" key="9">
    <citation type="journal article" date="2004" name="Genome Res.">
        <title>The status, quality, and expansion of the NIH full-length cDNA project: the Mammalian Gene Collection (MGC).</title>
        <authorList>
            <consortium name="The MGC Project Team"/>
        </authorList>
    </citation>
    <scope>NUCLEOTIDE SEQUENCE [LARGE SCALE MRNA] (ISOFORM 5)</scope>
    <scope>VARIANTS THR-696; GLY-968 AND PHE-1040</scope>
    <source>
        <tissue evidence="30">Testis</tissue>
    </source>
</reference>
<reference key="10">
    <citation type="journal article" date="2000" name="Biochim. Biophys. Acta">
        <title>LRDD, a novel leucine rich repeat and death domain containing protein.</title>
        <authorList>
            <person name="Telliez J.-B."/>
            <person name="Bean K.M."/>
            <person name="Lin L.-L."/>
        </authorList>
    </citation>
    <scope>INTERACTION WITH PIDD1</scope>
</reference>
<reference evidence="27" key="11">
    <citation type="journal article" date="2004" name="Oncogene">
        <title>IG20, in contrast to DENN-SV, (MADD splice variants) suppresses tumor cell survival, and enhances their susceptibility to apoptosis and cancer drugs.</title>
        <authorList>
            <person name="Efimova E.V."/>
            <person name="Al-Zoubi A.M."/>
            <person name="Martinez O."/>
            <person name="Kaithamana S."/>
            <person name="Lu S."/>
            <person name="Arima T."/>
            <person name="Prabhakar B.S."/>
        </authorList>
    </citation>
    <scope>ALTERNATIVE SPLICING</scope>
    <scope>TISSUE SPECIFICITY</scope>
</reference>
<reference key="12">
    <citation type="journal article" date="2006" name="Mol. Cell. Proteomics">
        <title>Transgenic mouse proteomics identifies new 14-3-3-associated proteins involved in cytoskeletal rearrangements and cell signaling.</title>
        <authorList>
            <person name="Angrand P.O."/>
            <person name="Segura I."/>
            <person name="Voelkel P."/>
            <person name="Ghidelli S."/>
            <person name="Terry R."/>
            <person name="Brajenovic M."/>
            <person name="Vintersten K."/>
            <person name="Klein R."/>
            <person name="Superti-Furga G."/>
            <person name="Drewes G."/>
            <person name="Kuster B."/>
            <person name="Bouwmeester T."/>
            <person name="Acker-Palmer A."/>
        </authorList>
    </citation>
    <scope>INTERACTION WITH YWHAZ</scope>
</reference>
<reference key="13">
    <citation type="journal article" date="2008" name="J. Biol. Chem.">
        <title>Rab3GEP is the non-redundant guanine nucleotide exchange factor for Rab27a in melanocytes.</title>
        <authorList>
            <person name="Figueiredo A.C."/>
            <person name="Wasmeier C."/>
            <person name="Tarafder A.K."/>
            <person name="Ramalho J.S."/>
            <person name="Baron R.A."/>
            <person name="Seabra M.C."/>
        </authorList>
    </citation>
    <scope>FUNCTION</scope>
</reference>
<reference key="14">
    <citation type="journal article" date="2008" name="Mol. Cell">
        <title>Kinase-selective enrichment enables quantitative phosphoproteomics of the kinome across the cell cycle.</title>
        <authorList>
            <person name="Daub H."/>
            <person name="Olsen J.V."/>
            <person name="Bairlein M."/>
            <person name="Gnad F."/>
            <person name="Oppermann F.S."/>
            <person name="Korner R."/>
            <person name="Greff Z."/>
            <person name="Keri G."/>
            <person name="Stemmann O."/>
            <person name="Mann M."/>
        </authorList>
    </citation>
    <scope>IDENTIFICATION BY MASS SPECTROMETRY [LARGE SCALE ANALYSIS]</scope>
    <source>
        <tissue>Cervix carcinoma</tissue>
    </source>
</reference>
<reference key="15">
    <citation type="journal article" date="2008" name="Proc. Natl. Acad. Sci. U.S.A.">
        <title>A quantitative atlas of mitotic phosphorylation.</title>
        <authorList>
            <person name="Dephoure N."/>
            <person name="Zhou C."/>
            <person name="Villen J."/>
            <person name="Beausoleil S.A."/>
            <person name="Bakalarski C.E."/>
            <person name="Elledge S.J."/>
            <person name="Gygi S.P."/>
        </authorList>
    </citation>
    <scope>PHOSPHORYLATION [LARGE SCALE ANALYSIS] AT SER-818; SER-820 AND SER-921</scope>
    <scope>IDENTIFICATION BY MASS SPECTROMETRY [LARGE SCALE ANALYSIS]</scope>
    <source>
        <tissue>Cervix carcinoma</tissue>
    </source>
</reference>
<reference key="16">
    <citation type="journal article" date="2009" name="Mol. Cell. Proteomics">
        <title>Large-scale proteomics analysis of the human kinome.</title>
        <authorList>
            <person name="Oppermann F.S."/>
            <person name="Gnad F."/>
            <person name="Olsen J.V."/>
            <person name="Hornberger R."/>
            <person name="Greff Z."/>
            <person name="Keri G."/>
            <person name="Mann M."/>
            <person name="Daub H."/>
        </authorList>
    </citation>
    <scope>IDENTIFICATION BY MASS SPECTROMETRY [LARGE SCALE ANALYSIS]</scope>
</reference>
<reference key="17">
    <citation type="journal article" date="2009" name="Sci. Signal.">
        <title>Quantitative phosphoproteomic analysis of T cell receptor signaling reveals system-wide modulation of protein-protein interactions.</title>
        <authorList>
            <person name="Mayya V."/>
            <person name="Lundgren D.H."/>
            <person name="Hwang S.-I."/>
            <person name="Rezaul K."/>
            <person name="Wu L."/>
            <person name="Eng J.K."/>
            <person name="Rodionov V."/>
            <person name="Han D.K."/>
        </authorList>
    </citation>
    <scope>IDENTIFICATION BY MASS SPECTROMETRY [LARGE SCALE ANALYSIS]</scope>
    <source>
        <tissue>Leukemic T-cell</tissue>
    </source>
</reference>
<reference key="18">
    <citation type="journal article" date="2010" name="J. Cell Biol.">
        <title>Family-wide characterization of the DENN domain Rab GDP-GTP exchange factors.</title>
        <authorList>
            <person name="Yoshimura S."/>
            <person name="Gerondopoulos A."/>
            <person name="Linford A."/>
            <person name="Rigden D.J."/>
            <person name="Barr F.A."/>
        </authorList>
    </citation>
    <scope>FUNCTION AS GUANYL-NUCLEOTIDE EXCHANGE FACTOR</scope>
</reference>
<reference key="19">
    <citation type="journal article" date="2010" name="Sci. Signal.">
        <title>Quantitative phosphoproteomics reveals widespread full phosphorylation site occupancy during mitosis.</title>
        <authorList>
            <person name="Olsen J.V."/>
            <person name="Vermeulen M."/>
            <person name="Santamaria A."/>
            <person name="Kumar C."/>
            <person name="Miller M.L."/>
            <person name="Jensen L.J."/>
            <person name="Gnad F."/>
            <person name="Cox J."/>
            <person name="Jensen T.S."/>
            <person name="Nigg E.A."/>
            <person name="Brunak S."/>
            <person name="Mann M."/>
        </authorList>
    </citation>
    <scope>IDENTIFICATION BY MASS SPECTROMETRY [LARGE SCALE ANALYSIS]</scope>
    <source>
        <tissue>Cervix carcinoma</tissue>
    </source>
</reference>
<reference key="20">
    <citation type="journal article" date="2011" name="BMC Syst. Biol.">
        <title>Initial characterization of the human central proteome.</title>
        <authorList>
            <person name="Burkard T.R."/>
            <person name="Planyavsky M."/>
            <person name="Kaupe I."/>
            <person name="Breitwieser F.P."/>
            <person name="Buerckstuemmer T."/>
            <person name="Bennett K.L."/>
            <person name="Superti-Furga G."/>
            <person name="Colinge J."/>
        </authorList>
    </citation>
    <scope>IDENTIFICATION BY MASS SPECTROMETRY [LARGE SCALE ANALYSIS]</scope>
</reference>
<reference key="21">
    <citation type="journal article" date="2013" name="J. Proteome Res.">
        <title>Toward a comprehensive characterization of a human cancer cell phosphoproteome.</title>
        <authorList>
            <person name="Zhou H."/>
            <person name="Di Palma S."/>
            <person name="Preisinger C."/>
            <person name="Peng M."/>
            <person name="Polat A.N."/>
            <person name="Heck A.J."/>
            <person name="Mohammed S."/>
        </authorList>
    </citation>
    <scope>PHOSPHORYLATION [LARGE SCALE ANALYSIS] AT SER-156; SER-692; SER-858; SER-862; SER-916; SER-921; SER-1059; THR-1237; SER-1239 AND SER-1270</scope>
    <scope>IDENTIFICATION BY MASS SPECTROMETRY [LARGE SCALE ANALYSIS]</scope>
    <source>
        <tissue>Cervix carcinoma</tissue>
        <tissue>Erythroleukemia</tissue>
    </source>
</reference>
<reference key="22">
    <citation type="journal article" date="2017" name="Hum. Genet.">
        <title>Expanding the genetic heterogeneity of intellectual disability.</title>
        <authorList>
            <person name="Anazi S."/>
            <person name="Maddirevula S."/>
            <person name="Salpietro V."/>
            <person name="Asi Y.T."/>
            <person name="Alsahli S."/>
            <person name="Alhashem A."/>
            <person name="Shamseldin H.E."/>
            <person name="AlZahrani F."/>
            <person name="Patel N."/>
            <person name="Ibrahim N."/>
            <person name="Abdulwahab F.M."/>
            <person name="Hashem M."/>
            <person name="Alhashmi N."/>
            <person name="Al Murshedi F."/>
            <person name="Al Kindy A."/>
            <person name="Alshaer A."/>
            <person name="Rumayyan A."/>
            <person name="Al Tala S."/>
            <person name="Kurdi W."/>
            <person name="Alsaman A."/>
            <person name="Alasmari A."/>
            <person name="Banu S."/>
            <person name="Sultan T."/>
            <person name="Saleh M.M."/>
            <person name="Alkuraya H."/>
            <person name="Salih M.A."/>
            <person name="Aldhalaan H."/>
            <person name="Ben-Omran T."/>
            <person name="Al Musafri F."/>
            <person name="Ali R."/>
            <person name="Suleiman J."/>
            <person name="Tabarki B."/>
            <person name="El-Hattab A.W."/>
            <person name="Bupp C."/>
            <person name="Alfadhel M."/>
            <person name="Al Tassan N."/>
            <person name="Monies D."/>
            <person name="Arold S.T."/>
            <person name="Abouelhoda M."/>
            <person name="Lashley T."/>
            <person name="Houlden H."/>
            <person name="Faqeih E."/>
            <person name="Alkuraya F.S."/>
        </authorList>
    </citation>
    <scope>INVOLVEMENT IN NEDDISH</scope>
    <scope>VARIANTS NEDDISH HIS-198 AND 327-ARG--SER-1647 DEL</scope>
    <scope>VARIANT ARG-1040</scope>
</reference>
<reference key="23">
    <citation type="journal article" date="2018" name="Hum. Genet.">
        <title>Correction to: Expanding the genetic heterogeneity of intellectual disability.</title>
        <authorList>
            <person name="Anazi S."/>
            <person name="Maddirevula S."/>
            <person name="Salpietro V."/>
            <person name="Asi Y.T."/>
            <person name="Alsahli S."/>
            <person name="Alhashem A."/>
            <person name="Shamseldin H.E."/>
            <person name="AlZahrani F."/>
            <person name="Patel N."/>
            <person name="Ibrahim N."/>
            <person name="Abdulwahab F.M."/>
            <person name="Hashem M."/>
            <person name="Alhashmi N."/>
            <person name="Al Murshedi F."/>
            <person name="Al Kindy A."/>
            <person name="Alshaer A."/>
            <person name="Rumayyan A."/>
            <person name="Al Tala S."/>
            <person name="Kurdi W."/>
            <person name="Alsaman A."/>
            <person name="Alasmari A."/>
            <person name="Banu S."/>
            <person name="Sultan T."/>
            <person name="Saleh M.M."/>
            <person name="Alkuraya H."/>
            <person name="Salih M.A."/>
            <person name="Aldhalaan H."/>
            <person name="Ben-Omran T."/>
            <person name="Al Musafri F."/>
            <person name="Ali R."/>
            <person name="Suleiman J."/>
            <person name="Tabarki B."/>
            <person name="El-Hattab A.W."/>
            <person name="Bupp C."/>
            <person name="Alfadhel M."/>
            <person name="Al Tassan N."/>
            <person name="Monies D."/>
            <person name="Arold S.T."/>
            <person name="Abouelhoda M."/>
            <person name="Lashley T."/>
            <person name="Houlden H."/>
            <person name="Faqeih E."/>
            <person name="Alkuraya F.S."/>
        </authorList>
    </citation>
    <scope>ERRATUM OF PUBMED:28940097</scope>
</reference>
<reference key="24">
    <citation type="journal article" date="2020" name="Brain">
        <title>Biallelic MADD variants cause a phenotypic spectrum ranging from developmental delay to a multisystem disorder.</title>
        <authorList>
            <consortium name="Undiagnosed Diseases Network"/>
            <person name="Schneeberger P.E."/>
            <person name="Kortuem F."/>
            <person name="Korenke G.C."/>
            <person name="Alawi M."/>
            <person name="Santer R."/>
            <person name="Woidy M."/>
            <person name="Buhas D."/>
            <person name="Fox S."/>
            <person name="Juusola J."/>
            <person name="Alfadhel M."/>
            <person name="Webb B.D."/>
            <person name="Coci E.G."/>
            <person name="Abou Jamra R."/>
            <person name="Siekmeyer M."/>
            <person name="Biskup S."/>
            <person name="Heller C."/>
            <person name="Maier E.M."/>
            <person name="Javaher-Haghighi P."/>
            <person name="Bedeschi M.F."/>
            <person name="Ajmone P.F."/>
            <person name="Iascone M."/>
            <person name="Peeters H."/>
            <person name="Ballon K."/>
            <person name="Jaeken J."/>
            <person name="Rodriguez Alonso A."/>
            <person name="Palomares-Bralo M."/>
            <person name="Santos-Simarro F."/>
            <person name="Meuwissen M.E.C."/>
            <person name="Beysen D."/>
            <person name="Kooy R.F."/>
            <person name="Houlden H."/>
            <person name="Murphy D."/>
            <person name="Doosti M."/>
            <person name="Karimiani E.G."/>
            <person name="Mojarrad M."/>
            <person name="Maroofian R."/>
            <person name="Noskova L."/>
            <person name="Kmoch S."/>
            <person name="Honzik T."/>
            <person name="Cope H."/>
            <person name="Sanchez-Valle A."/>
            <person name="Gelb B.D."/>
            <person name="Kurth I."/>
            <person name="Hempel M."/>
            <person name="Kutsche K."/>
        </authorList>
    </citation>
    <scope>INVOLVEMENT IN DEEAH</scope>
    <scope>VARIANTS DEEAH 216-ARG--SER-1647 DEL; PHE-257; VAL-305; 327-ARG--SER-1647 DEL; LEU-372; ARG-1040 AND 1431-TRP--SER-1647 DEL</scope>
    <scope>VARIANTS NEDDISH PRO-346; LEU-354; PRO-945; 1213-SER--SER-1647 DEL; SER-1283; ARG-1318 AND 1532-ARG--SER-1647 DEL</scope>
    <scope>CHARACTERIZATION OF VARIANTS DEEAH VAL-305; ARG-1040</scope>
    <scope>FUNCTION</scope>
</reference>
<sequence>MVQKKKFCPRLLDYLVIVGARHPSSDSVAQTPELLRRYPLEDHTEFPLPPDVVFFCQPEGCLSVRQRRMSLRDDTSFVFTLTDKDTGVTRYGICVNFYRSFQKRISKEKGEGGAGSRGKEGTHATCASEEGGTESSESGSSLQPLSADSTPDVNQSPRGKRRAKAGSRSRNSTLTSLCVLSHYPFFSTFRECLYTLKRLVDCCSERLLGKKLGIPRGVQRDTMWRIFTGSLLVEEKSSALLHDLREIEAWIYRLLRSPVPVSGQKRVDIEVLPQELQPALTFALPDPSRFTLVDFPLHLPLELLGVDACLQVLTCILLEHKVVLQSRDYNALSMSVMAFVAMIYPLEYMFPVIPLLPTCMASAEQLLLAPTPYIIGVPASFFLYKLDFKMPDDVWLVDLDSNRVIAPTNAEVLPILPEPESLELKKHLKQALASMSLNTQPILNLEKFHEGQEIPLLLGRPSNDLQSTPSTEFNPLIYGNDVDSVDVATRVAMVRFFNSANVLQGFQMHTRTLRLFPRPVVAFQAGSFLASRPRQTPFAEKLARTQAVEYFGEWILNPTNYAFQRIHNNMFDPALIGDKPKWYAHQLQPIHYRVYDSNSQLAEALSVPPERDSDSEPTDDSGSDSMDYDDSSSSYSSLGDFVSEMMKCDINGDTPNVDPLTHAALGDASEVEIDELQNQKEAEEPGPDSENSQENPPLRSSSSTTASSSPSTVIHGANSEPADSTEMDDKAAVGVSKPLPSVPPSIGKSNVDRRQAEIGEGSVRRRIYDNPYFEPQYGFPPEEDEDEQGESYTPRFSQHVSGNRAQKLLRPNSLRLASDSDAESDSRASSPNSTVSNTSTEGFGGIMSFASSLYRNHSTSFSLSNLTLPTKGAREKATPFPSLKVFGLNTLMEIVTEAGPGSGEGNRRALVDQKSSVIKHSPTVKREPPSPQGRSSNSSENQQFLKEVVHSVLDGQGVGWLNMKKVRRLLESEQLRVFVLSKLNRMVQSEDDARQDIIPDVEISRKVYKGMLDLLKCTVLSLEQSYAHAGLGGMASIFGLLEIAQTHYYSKEPDKRKRSPTESVNTPVGKDPGLAGRGDPKAMAQLRVPQLGPRAPSATGKGPKELDTRSLKEENFIASIELWNKHQEVKKQKALEKQRPEVIKPVFDLGETEEKKSQISADSGVSLTSSSQRTDQDSVIGVSPAVMIRSSSQDSEVSTVVSNSSGETLGADSDLSSNAGDGPGGEGSVHLASSRGTLSDSEIETNSATSTIFGKAHSLKPSIKEKLAGSPIRTSEDVSQRVYLYEGLLGRDKGSMWDQLEDAAMETFSISKERSTLWDQMQFWEDAFLDAVMLEREGMGMDQGPQEMIDRYLSLGEHDRKRLEDDEDRLLATLLHNLISYMLLMKVNKNDIRKKVRRLMGKSHIGLVYSQQINEVLDQLANLNGRDLSIWSSGSRHMKKQTFVVHAGTDTNGDIFFMEVCDDCVVLRSNIGTVYERWWYEKLINMTYCPKTKVLCLWRRNGSETQLNKFYTKKCRELYYCVKDSMERAAARQQSIKPGPELGGEFPVQDLKTGEGGLLQVTLEGINLKFMHNQVFIELNHIKKCNTVRGVFVLEEFVPEIKEVVSHKYKTPMAHEICYSVLCLFSYVAAVHSSEEDLRTPPRPVSS</sequence>
<evidence type="ECO:0000250" key="1">
    <source>
        <dbReference type="UniProtKB" id="O08873"/>
    </source>
</evidence>
<evidence type="ECO:0000250" key="2">
    <source>
        <dbReference type="UniProtKB" id="Q80U28"/>
    </source>
</evidence>
<evidence type="ECO:0000255" key="3"/>
<evidence type="ECO:0000255" key="4">
    <source>
        <dbReference type="PROSITE-ProRule" id="PRU00304"/>
    </source>
</evidence>
<evidence type="ECO:0000256" key="5">
    <source>
        <dbReference type="SAM" id="MobiDB-lite"/>
    </source>
</evidence>
<evidence type="ECO:0000269" key="6">
    <source>
    </source>
</evidence>
<evidence type="ECO:0000269" key="7">
    <source>
    </source>
</evidence>
<evidence type="ECO:0000269" key="8">
    <source>
    </source>
</evidence>
<evidence type="ECO:0000269" key="9">
    <source>
    </source>
</evidence>
<evidence type="ECO:0000269" key="10">
    <source>
    </source>
</evidence>
<evidence type="ECO:0000269" key="11">
    <source>
    </source>
</evidence>
<evidence type="ECO:0000269" key="12">
    <source>
    </source>
</evidence>
<evidence type="ECO:0000269" key="13">
    <source>
    </source>
</evidence>
<evidence type="ECO:0000269" key="14">
    <source>
    </source>
</evidence>
<evidence type="ECO:0000269" key="15">
    <source>
    </source>
</evidence>
<evidence type="ECO:0000269" key="16">
    <source>
    </source>
</evidence>
<evidence type="ECO:0000269" key="17">
    <source>
    </source>
</evidence>
<evidence type="ECO:0000269" key="18">
    <source>
    </source>
</evidence>
<evidence type="ECO:0000303" key="19">
    <source>
    </source>
</evidence>
<evidence type="ECO:0000303" key="20">
    <source>
    </source>
</evidence>
<evidence type="ECO:0000303" key="21">
    <source>
    </source>
</evidence>
<evidence type="ECO:0000303" key="22">
    <source>
    </source>
</evidence>
<evidence type="ECO:0000303" key="23">
    <source>
    </source>
</evidence>
<evidence type="ECO:0000303" key="24">
    <source>
    </source>
</evidence>
<evidence type="ECO:0000303" key="25">
    <source>
    </source>
</evidence>
<evidence type="ECO:0000303" key="26">
    <source>
    </source>
</evidence>
<evidence type="ECO:0000305" key="27"/>
<evidence type="ECO:0000312" key="28">
    <source>
        <dbReference type="EMBL" id="AAB57735.1"/>
    </source>
</evidence>
<evidence type="ECO:0000312" key="29">
    <source>
        <dbReference type="EMBL" id="AAD12154.1"/>
    </source>
</evidence>
<evidence type="ECO:0000312" key="30">
    <source>
        <dbReference type="EMBL" id="AAH40484.1"/>
    </source>
</evidence>
<evidence type="ECO:0000312" key="31">
    <source>
        <dbReference type="EMBL" id="AAL40265.1"/>
    </source>
</evidence>
<evidence type="ECO:0000312" key="32">
    <source>
        <dbReference type="EMBL" id="BAA20814.2"/>
    </source>
</evidence>
<evidence type="ECO:0000312" key="33">
    <source>
        <dbReference type="HGNC" id="HGNC:6766"/>
    </source>
</evidence>
<evidence type="ECO:0007744" key="34">
    <source>
    </source>
</evidence>
<evidence type="ECO:0007744" key="35">
    <source>
    </source>
</evidence>
<feature type="chain" id="PRO_0000278138" description="MAP kinase-activating death domain protein" evidence="1">
    <location>
        <begin position="1"/>
        <end position="1647"/>
    </location>
</feature>
<feature type="domain" description="uDENN" evidence="4">
    <location>
        <begin position="14"/>
        <end position="268"/>
    </location>
</feature>
<feature type="domain" description="cDENN" evidence="4">
    <location>
        <begin position="289"/>
        <end position="429"/>
    </location>
</feature>
<feature type="domain" description="dDENN" evidence="4">
    <location>
        <begin position="431"/>
        <end position="565"/>
    </location>
</feature>
<feature type="domain" description="Death" evidence="3">
    <location>
        <begin position="1340"/>
        <end position="1415"/>
    </location>
</feature>
<feature type="region of interest" description="Disordered" evidence="5">
    <location>
        <begin position="108"/>
        <end position="168"/>
    </location>
</feature>
<feature type="region of interest" description="Disordered" evidence="5">
    <location>
        <begin position="604"/>
        <end position="636"/>
    </location>
</feature>
<feature type="region of interest" description="Disordered" evidence="5">
    <location>
        <begin position="678"/>
        <end position="842"/>
    </location>
</feature>
<feature type="region of interest" description="Disordered" evidence="5">
    <location>
        <begin position="913"/>
        <end position="941"/>
    </location>
</feature>
<feature type="region of interest" description="Disordered" evidence="5">
    <location>
        <begin position="1051"/>
        <end position="1110"/>
    </location>
</feature>
<feature type="region of interest" description="Disordered" evidence="5">
    <location>
        <begin position="1146"/>
        <end position="1243"/>
    </location>
</feature>
<feature type="compositionally biased region" description="Basic and acidic residues" evidence="5">
    <location>
        <begin position="108"/>
        <end position="122"/>
    </location>
</feature>
<feature type="compositionally biased region" description="Low complexity" evidence="5">
    <location>
        <begin position="128"/>
        <end position="141"/>
    </location>
</feature>
<feature type="compositionally biased region" description="Polar residues" evidence="5">
    <location>
        <begin position="142"/>
        <end position="157"/>
    </location>
</feature>
<feature type="compositionally biased region" description="Basic residues" evidence="5">
    <location>
        <begin position="158"/>
        <end position="167"/>
    </location>
</feature>
<feature type="compositionally biased region" description="Acidic residues" evidence="5">
    <location>
        <begin position="615"/>
        <end position="630"/>
    </location>
</feature>
<feature type="compositionally biased region" description="Polar residues" evidence="5">
    <location>
        <begin position="689"/>
        <end position="699"/>
    </location>
</feature>
<feature type="compositionally biased region" description="Low complexity" evidence="5">
    <location>
        <begin position="700"/>
        <end position="712"/>
    </location>
</feature>
<feature type="compositionally biased region" description="Basic and acidic residues" evidence="5">
    <location>
        <begin position="750"/>
        <end position="768"/>
    </location>
</feature>
<feature type="compositionally biased region" description="Polar residues" evidence="5">
    <location>
        <begin position="790"/>
        <end position="804"/>
    </location>
</feature>
<feature type="compositionally biased region" description="Low complexity" evidence="5">
    <location>
        <begin position="827"/>
        <end position="840"/>
    </location>
</feature>
<feature type="compositionally biased region" description="Polar residues" evidence="5">
    <location>
        <begin position="932"/>
        <end position="941"/>
    </location>
</feature>
<feature type="compositionally biased region" description="Polar residues" evidence="5">
    <location>
        <begin position="1158"/>
        <end position="1173"/>
    </location>
</feature>
<feature type="compositionally biased region" description="Polar residues" evidence="5">
    <location>
        <begin position="1189"/>
        <end position="1207"/>
    </location>
</feature>
<feature type="compositionally biased region" description="Polar residues" evidence="5">
    <location>
        <begin position="1234"/>
        <end position="1243"/>
    </location>
</feature>
<feature type="modified residue" description="Phosphoserine" evidence="35">
    <location>
        <position position="156"/>
    </location>
</feature>
<feature type="modified residue" description="Phosphoserine" evidence="1">
    <location>
        <position position="689"/>
    </location>
</feature>
<feature type="modified residue" description="Phosphoserine" evidence="35">
    <location>
        <position position="692"/>
    </location>
</feature>
<feature type="modified residue" description="Phosphoserine" evidence="1">
    <location>
        <position position="813"/>
    </location>
</feature>
<feature type="modified residue" description="Phosphoserine" evidence="34">
    <location>
        <position position="818"/>
    </location>
</feature>
<feature type="modified residue" description="Phosphoserine" evidence="34">
    <location>
        <position position="820"/>
    </location>
</feature>
<feature type="modified residue" description="Phosphoserine" evidence="35">
    <location>
        <position position="858"/>
    </location>
</feature>
<feature type="modified residue" description="Phosphoserine" evidence="35">
    <location>
        <position position="862"/>
    </location>
</feature>
<feature type="modified residue" description="Phosphoserine" evidence="35">
    <location>
        <position position="916"/>
    </location>
</feature>
<feature type="modified residue" description="Phosphoserine" evidence="34 35">
    <location>
        <position position="921"/>
    </location>
</feature>
<feature type="modified residue" description="Phosphoserine" evidence="1">
    <location>
        <position position="930"/>
    </location>
</feature>
<feature type="modified residue" description="Phosphoserine" evidence="35">
    <location>
        <position position="1059"/>
    </location>
</feature>
<feature type="modified residue" description="Phosphothreonine" evidence="1">
    <location>
        <position position="1061"/>
    </location>
</feature>
<feature type="modified residue" description="Phosphothreonine" evidence="2">
    <location>
        <position position="1066"/>
    </location>
</feature>
<feature type="modified residue" description="Phosphoserine" evidence="2">
    <location>
        <position position="1110"/>
    </location>
</feature>
<feature type="modified residue" description="Phosphothreonine" evidence="35">
    <location>
        <position position="1237"/>
    </location>
</feature>
<feature type="modified residue" description="Phosphoserine" evidence="35">
    <location>
        <position position="1239"/>
    </location>
</feature>
<feature type="modified residue" description="Phosphoserine" evidence="35">
    <location>
        <position position="1270"/>
    </location>
</feature>
<feature type="splice variant" id="VSP_052293" description="In isoform 4, isoform 5, isoform 6 and isoform 8." evidence="19 20 21 23 26">
    <location>
        <begin position="762"/>
        <end position="804"/>
    </location>
</feature>
<feature type="splice variant" id="VSP_052294" description="In isoform 3, isoform 5, isoform 6 and isoform 8." evidence="19 20 21 23 24 26">
    <location>
        <begin position="885"/>
        <end position="904"/>
    </location>
</feature>
<feature type="splice variant" id="VSP_052295" description="In isoform 2, isoform 3, isoform 4, isoform 5, isoform 6 and isoform 8." evidence="19 20 21 23 24 26">
    <original>ELWNKHQEVKKQKALEKQR</original>
    <variation>G</variation>
    <location>
        <begin position="1121"/>
        <end position="1139"/>
    </location>
</feature>
<feature type="splice variant" id="VSP_044848" description="In isoform 8." evidence="20">
    <location>
        <begin position="1197"/>
        <end position="1200"/>
    </location>
</feature>
<feature type="splice variant" id="VSP_055676" description="In isoform 3." evidence="23 24 26">
    <location>
        <position position="1201"/>
    </location>
</feature>
<feature type="splice variant" id="VSP_052296" description="In isoform 2, isoform 3, isoform 4, isoform 5, isoform 6 and isoform 8." evidence="19 20 21 23 24 26">
    <location>
        <begin position="1291"/>
        <end position="1311"/>
    </location>
</feature>
<feature type="splice variant" id="VSP_052297" description="In isoform 6 and isoform 7." evidence="19 25">
    <original>VFIELNHI</original>
    <variation>FLKLKKW</variation>
    <location>
        <begin position="1575"/>
        <end position="1582"/>
    </location>
</feature>
<feature type="splice variant" id="VSP_052298" description="In isoform 6 and isoform 7." evidence="19 25">
    <location>
        <begin position="1583"/>
        <end position="1647"/>
    </location>
</feature>
<feature type="sequence variant" id="VAR_084659" description="In NEDDISH; uncertain significance; dbSNP:rs149316791." evidence="13">
    <original>R</original>
    <variation>H</variation>
    <location>
        <position position="198"/>
    </location>
</feature>
<feature type="sequence variant" id="VAR_084660" description="In DEEAH; uncertain significance." evidence="14">
    <location>
        <begin position="216"/>
        <end position="1647"/>
    </location>
</feature>
<feature type="sequence variant" id="VAR_084661" description="In DEEAH; impaired TNFA-induced activation of the MAP kinases ERK1/2; enhanced susceptibility to TNFA-induced apoptosis; decreased EGF internalization; dbSNP:rs2049504624." evidence="14">
    <original>S</original>
    <variation>F</variation>
    <location>
        <position position="257"/>
    </location>
</feature>
<feature type="sequence variant" id="VAR_084662" description="In DEEAH; impaired TNFA-induced activation of the MAP kinases ERK1/2; enhanced susceptibility to TNFA-induced apoptosis; decreased EGF internalization; dbSNP:rs1326027590." evidence="14">
    <original>G</original>
    <variation>V</variation>
    <location>
        <position position="305"/>
    </location>
</feature>
<feature type="sequence variant" id="VAR_084663" description="In DEEAH and NEDDISH; uncertain significance; dbSNP:rs147179561." evidence="13 14">
    <location>
        <begin position="327"/>
        <end position="1647"/>
    </location>
</feature>
<feature type="sequence variant" id="VAR_084664" description="In NEDDISH; uncertain significance; dbSNP:rs1591767154." evidence="14">
    <original>L</original>
    <variation>P</variation>
    <location>
        <position position="346"/>
    </location>
</feature>
<feature type="sequence variant" id="VAR_084665" description="In NEDDISH; impaired TNFA-induced activation of the MAP kinases ERK1/2; enhanced susceptibility to TNFA-induced apoptosis; decreased EGF internalization; dbSNP:rs370382902." evidence="14">
    <original>P</original>
    <variation>L</variation>
    <location>
        <position position="354"/>
    </location>
</feature>
<feature type="sequence variant" id="VAR_084666" description="In DEEAH; uncertain significance; dbSNP:rs147713337." evidence="14">
    <original>P</original>
    <variation>L</variation>
    <location>
        <position position="372"/>
    </location>
</feature>
<feature type="sequence variant" id="VAR_030666" description="In dbSNP:rs17854007." evidence="9">
    <original>P</original>
    <variation>T</variation>
    <location>
        <position position="696"/>
    </location>
</feature>
<feature type="sequence variant" id="VAR_030667" description="In dbSNP:rs1051006." evidence="16">
    <original>V</original>
    <variation>M</variation>
    <location>
        <position position="751"/>
    </location>
</feature>
<feature type="sequence variant" id="VAR_051148" description="In dbSNP:rs3736101.">
    <original>R</original>
    <variation>Q</variation>
    <location>
        <position position="765"/>
    </location>
</feature>
<feature type="sequence variant" id="VAR_084667" description="In NEDDISH; uncertain significance." evidence="14">
    <original>L</original>
    <variation>P</variation>
    <location>
        <position position="945"/>
    </location>
</feature>
<feature type="sequence variant" id="VAR_030668" description="In dbSNP:rs17854008." evidence="9">
    <original>R</original>
    <variation>G</variation>
    <location>
        <position position="968"/>
    </location>
</feature>
<feature type="sequence variant" id="VAR_030669" description="In dbSNP:rs17854009." evidence="9">
    <original>L</original>
    <variation>F</variation>
    <location>
        <position position="1040"/>
    </location>
</feature>
<feature type="sequence variant" id="VAR_084668" description="In DEEAH; impaired TNFA-induced activation of the MAP kinases ERK1/2; enhanced susceptibility to TNFA-induced apoptosis; decreased EGF internalization." evidence="13 14">
    <original>L</original>
    <variation>R</variation>
    <location>
        <position position="1040"/>
    </location>
</feature>
<feature type="sequence variant" id="VAR_084669" description="In NEDDISH; impaired TNFA-induced activation of the MAP kinases ERK1/2; enhanced susceptibility to TNFA-induced apoptosis; decreased EGF internalization." evidence="14">
    <location>
        <begin position="1213"/>
        <end position="1647"/>
    </location>
</feature>
<feature type="sequence variant" id="VAR_084670" description="In NEDDISH; uncertain significance; dbSNP:rs2085189339." evidence="14">
    <original>Y</original>
    <variation>S</variation>
    <location>
        <position position="1283"/>
    </location>
</feature>
<feature type="sequence variant" id="VAR_084671" description="In NEDDISH; uncertain significance." evidence="14">
    <original>W</original>
    <variation>R</variation>
    <location>
        <position position="1318"/>
    </location>
</feature>
<feature type="sequence variant" id="VAR_084672" description="In DEEAH; uncertain significance." evidence="14">
    <location>
        <begin position="1431"/>
        <end position="1647"/>
    </location>
</feature>
<feature type="sequence variant" id="VAR_051149" description="In dbSNP:rs34534575.">
    <original>L</original>
    <variation>P</variation>
    <location>
        <position position="1518"/>
    </location>
</feature>
<feature type="sequence variant" id="VAR_084673" description="In NEDDISH; uncertain significance; dbSNP:rs971864929." evidence="14">
    <location>
        <begin position="1532"/>
        <end position="1647"/>
    </location>
</feature>
<feature type="sequence conflict" description="In Ref. 4; AAL40265/AAL40266/AAL40267/AAL40268/AAL35261." evidence="27" ref="4">
    <original>E</original>
    <variation>G</variation>
    <location>
        <position position="108"/>
    </location>
</feature>
<feature type="sequence conflict" description="In Ref. 4; AAL40265/AAL40266/AAL40267/AAL40268/AAL35261." evidence="27" ref="4">
    <original>L</original>
    <variation>F</variation>
    <location>
        <position position="145"/>
    </location>
</feature>
<feature type="sequence conflict" description="In Ref. 6; BAF85131." evidence="27" ref="6">
    <original>E</original>
    <variation>G</variation>
    <location>
        <position position="205"/>
    </location>
</feature>
<feature type="sequence conflict" description="In Ref. 4; AAL40265/AAL40266/AAL40267/AAL40268/AAL35261." evidence="27" ref="4">
    <original>V</original>
    <variation>L</variation>
    <location>
        <position position="312"/>
    </location>
</feature>
<feature type="sequence conflict" description="In Ref. 4; AAL40265/AAL40266/AAL40267/AAL40268/AAL35261." evidence="27" ref="4">
    <original>V</original>
    <variation>A</variation>
    <location>
        <position position="482"/>
    </location>
</feature>
<feature type="sequence conflict" description="In Ref. 6; BAF85131." evidence="27" ref="6">
    <original>A</original>
    <variation>V</variation>
    <location>
        <position position="500"/>
    </location>
</feature>
<feature type="sequence conflict" description="In Ref. 4; AAL40265/AAL40266/AAL40267/AAL40268/AAL35261." evidence="27" ref="4">
    <original>S</original>
    <variation>C</variation>
    <location>
        <position position="1262"/>
    </location>
</feature>
<feature type="sequence conflict" description="In Ref. 6; BAF85131." evidence="27" ref="6">
    <original>F</original>
    <variation>S</variation>
    <location>
        <position position="1592"/>
    </location>
</feature>
<feature type="sequence conflict" description="In Ref. 6; BAF85131." evidence="27" ref="6">
    <original>R</original>
    <variation>G</variation>
    <location>
        <position position="1639"/>
    </location>
</feature>
<organism>
    <name type="scientific">Homo sapiens</name>
    <name type="common">Human</name>
    <dbReference type="NCBI Taxonomy" id="9606"/>
    <lineage>
        <taxon>Eukaryota</taxon>
        <taxon>Metazoa</taxon>
        <taxon>Chordata</taxon>
        <taxon>Craniata</taxon>
        <taxon>Vertebrata</taxon>
        <taxon>Euteleostomi</taxon>
        <taxon>Mammalia</taxon>
        <taxon>Eutheria</taxon>
        <taxon>Euarchontoglires</taxon>
        <taxon>Primates</taxon>
        <taxon>Haplorrhini</taxon>
        <taxon>Catarrhini</taxon>
        <taxon>Hominidae</taxon>
        <taxon>Homo</taxon>
    </lineage>
</organism>
<dbReference type="EMBL" id="U44953">
    <property type="protein sequence ID" value="AAD12154.1"/>
    <property type="molecule type" value="mRNA"/>
</dbReference>
<dbReference type="EMBL" id="U77352">
    <property type="protein sequence ID" value="AAB57735.1"/>
    <property type="molecule type" value="mRNA"/>
</dbReference>
<dbReference type="EMBL" id="AF440100">
    <property type="protein sequence ID" value="AAL40265.1"/>
    <property type="molecule type" value="mRNA"/>
</dbReference>
<dbReference type="EMBL" id="AF440101">
    <property type="protein sequence ID" value="AAL40266.1"/>
    <property type="molecule type" value="mRNA"/>
</dbReference>
<dbReference type="EMBL" id="AF440102">
    <property type="protein sequence ID" value="AAL40267.1"/>
    <property type="molecule type" value="mRNA"/>
</dbReference>
<dbReference type="EMBL" id="AF440103">
    <property type="protein sequence ID" value="AAL40268.1"/>
    <property type="molecule type" value="mRNA"/>
</dbReference>
<dbReference type="EMBL" id="AF440434">
    <property type="protein sequence ID" value="AAL35261.1"/>
    <property type="molecule type" value="mRNA"/>
</dbReference>
<dbReference type="EMBL" id="AB002356">
    <property type="protein sequence ID" value="BAA20814.2"/>
    <property type="status" value="ALT_INIT"/>
    <property type="molecule type" value="mRNA"/>
</dbReference>
<dbReference type="EMBL" id="AK292442">
    <property type="protein sequence ID" value="BAF85131.1"/>
    <property type="molecule type" value="mRNA"/>
</dbReference>
<dbReference type="EMBL" id="AC018410">
    <property type="status" value="NOT_ANNOTATED_CDS"/>
    <property type="molecule type" value="Genomic_DNA"/>
</dbReference>
<dbReference type="EMBL" id="AC090582">
    <property type="status" value="NOT_ANNOTATED_CDS"/>
    <property type="molecule type" value="Genomic_DNA"/>
</dbReference>
<dbReference type="EMBL" id="CH471064">
    <property type="protein sequence ID" value="EAW67931.1"/>
    <property type="molecule type" value="Genomic_DNA"/>
</dbReference>
<dbReference type="EMBL" id="CH471064">
    <property type="protein sequence ID" value="EAW67932.1"/>
    <property type="molecule type" value="Genomic_DNA"/>
</dbReference>
<dbReference type="EMBL" id="BC040484">
    <property type="protein sequence ID" value="AAH40484.1"/>
    <property type="molecule type" value="mRNA"/>
</dbReference>
<dbReference type="CCDS" id="CCDS41642.1">
    <molecule id="Q8WXG6-7"/>
</dbReference>
<dbReference type="CCDS" id="CCDS44586.1">
    <molecule id="Q8WXG6-3"/>
</dbReference>
<dbReference type="CCDS" id="CCDS44587.1">
    <molecule id="Q8WXG6-4"/>
</dbReference>
<dbReference type="CCDS" id="CCDS44588.1">
    <molecule id="Q8WXG6-5"/>
</dbReference>
<dbReference type="CCDS" id="CCDS44589.1">
    <molecule id="Q8WXG6-8"/>
</dbReference>
<dbReference type="CCDS" id="CCDS44590.1">
    <molecule id="Q8WXG6-6"/>
</dbReference>
<dbReference type="CCDS" id="CCDS7930.1">
    <molecule id="Q8WXG6-1"/>
</dbReference>
<dbReference type="CCDS" id="CCDS7932.1">
    <molecule id="Q8WXG6-2"/>
</dbReference>
<dbReference type="RefSeq" id="NP_001129415.1">
    <property type="nucleotide sequence ID" value="NM_001135943.1"/>
</dbReference>
<dbReference type="RefSeq" id="NP_001129416.1">
    <molecule id="Q8WXG6-8"/>
    <property type="nucleotide sequence ID" value="NM_001135944.2"/>
</dbReference>
<dbReference type="RefSeq" id="NP_001363544.1">
    <molecule id="Q8WXG6-5"/>
    <property type="nucleotide sequence ID" value="NM_001376615.1"/>
</dbReference>
<dbReference type="RefSeq" id="NP_001363545.1">
    <molecule id="Q8WXG6-5"/>
    <property type="nucleotide sequence ID" value="NM_001376616.1"/>
</dbReference>
<dbReference type="RefSeq" id="NP_001363547.1">
    <molecule id="Q8WXG6-8"/>
    <property type="nucleotide sequence ID" value="NM_001376618.1"/>
</dbReference>
<dbReference type="RefSeq" id="NP_001363548.1">
    <molecule id="Q8WXG6-8"/>
    <property type="nucleotide sequence ID" value="NM_001376619.1"/>
</dbReference>
<dbReference type="RefSeq" id="NP_001363550.1">
    <molecule id="Q8WXG6-8"/>
    <property type="nucleotide sequence ID" value="NM_001376621.1"/>
</dbReference>
<dbReference type="RefSeq" id="NP_003673.3">
    <molecule id="Q8WXG6-1"/>
    <property type="nucleotide sequence ID" value="NM_003682.3"/>
</dbReference>
<dbReference type="RefSeq" id="NP_569826.2">
    <property type="nucleotide sequence ID" value="NM_130470.2"/>
</dbReference>
<dbReference type="RefSeq" id="NP_569827.2">
    <molecule id="Q8WXG6-4"/>
    <property type="nucleotide sequence ID" value="NM_130471.3"/>
</dbReference>
<dbReference type="RefSeq" id="NP_569828.2">
    <molecule id="Q8WXG6-5"/>
    <property type="nucleotide sequence ID" value="NM_130472.3"/>
</dbReference>
<dbReference type="RefSeq" id="NP_569829.2">
    <molecule id="Q8WXG6-2"/>
    <property type="nucleotide sequence ID" value="NM_130473.3"/>
</dbReference>
<dbReference type="RefSeq" id="NP_569830.2">
    <molecule id="Q8WXG6-6"/>
    <property type="nucleotide sequence ID" value="NM_130474.3"/>
</dbReference>
<dbReference type="RefSeq" id="NP_569831.1">
    <molecule id="Q8WXG6-7"/>
    <property type="nucleotide sequence ID" value="NM_130475.3"/>
</dbReference>
<dbReference type="RefSeq" id="NP_569832.2">
    <molecule id="Q8WXG6-3"/>
    <property type="nucleotide sequence ID" value="NM_130476.3"/>
</dbReference>
<dbReference type="RefSeq" id="XP_005253246.1">
    <property type="nucleotide sequence ID" value="XM_005253189.2"/>
</dbReference>
<dbReference type="RefSeq" id="XP_005253253.1">
    <property type="nucleotide sequence ID" value="XM_005253196.2"/>
</dbReference>
<dbReference type="RefSeq" id="XP_005253256.1">
    <property type="nucleotide sequence ID" value="XM_005253199.2"/>
</dbReference>
<dbReference type="RefSeq" id="XP_005253258.1">
    <property type="nucleotide sequence ID" value="XM_005253201.2"/>
</dbReference>
<dbReference type="RefSeq" id="XP_005253260.1">
    <property type="nucleotide sequence ID" value="XM_005253203.2"/>
</dbReference>
<dbReference type="RefSeq" id="XP_005253261.1">
    <property type="nucleotide sequence ID" value="XM_005253204.2"/>
</dbReference>
<dbReference type="RefSeq" id="XP_005253262.1">
    <property type="nucleotide sequence ID" value="XM_005253205.1"/>
</dbReference>
<dbReference type="BioGRID" id="114136">
    <property type="interactions" value="126"/>
</dbReference>
<dbReference type="ELM" id="Q8WXG6"/>
<dbReference type="FunCoup" id="Q8WXG6">
    <property type="interactions" value="1309"/>
</dbReference>
<dbReference type="IntAct" id="Q8WXG6">
    <property type="interactions" value="67"/>
</dbReference>
<dbReference type="MINT" id="Q8WXG6"/>
<dbReference type="STRING" id="9606.ENSP00000310933"/>
<dbReference type="GlyCosmos" id="Q8WXG6">
    <property type="glycosylation" value="2 sites, 1 glycan"/>
</dbReference>
<dbReference type="GlyGen" id="Q8WXG6">
    <property type="glycosylation" value="4 sites, 2 N-linked glycans (2 sites), 1 O-linked glycan (2 sites)"/>
</dbReference>
<dbReference type="iPTMnet" id="Q8WXG6"/>
<dbReference type="MetOSite" id="Q8WXG6"/>
<dbReference type="PhosphoSitePlus" id="Q8WXG6"/>
<dbReference type="SwissPalm" id="Q8WXG6"/>
<dbReference type="BioMuta" id="MADD"/>
<dbReference type="DMDM" id="126215742"/>
<dbReference type="jPOST" id="Q8WXG6"/>
<dbReference type="MassIVE" id="Q8WXG6"/>
<dbReference type="PaxDb" id="9606-ENSP00000310933"/>
<dbReference type="PeptideAtlas" id="Q8WXG6"/>
<dbReference type="ProteomicsDB" id="6231"/>
<dbReference type="ProteomicsDB" id="75032">
    <molecule id="Q8WXG6-1"/>
</dbReference>
<dbReference type="ProteomicsDB" id="75033">
    <molecule id="Q8WXG6-2"/>
</dbReference>
<dbReference type="ProteomicsDB" id="75034">
    <molecule id="Q8WXG6-3"/>
</dbReference>
<dbReference type="ProteomicsDB" id="75035">
    <molecule id="Q8WXG6-4"/>
</dbReference>
<dbReference type="ProteomicsDB" id="75036">
    <molecule id="Q8WXG6-5"/>
</dbReference>
<dbReference type="ProteomicsDB" id="75037">
    <molecule id="Q8WXG6-6"/>
</dbReference>
<dbReference type="ProteomicsDB" id="75038">
    <molecule id="Q8WXG6-7"/>
</dbReference>
<dbReference type="Pumba" id="Q8WXG6"/>
<dbReference type="Antibodypedia" id="13636">
    <property type="antibodies" value="176 antibodies from 37 providers"/>
</dbReference>
<dbReference type="DNASU" id="8567"/>
<dbReference type="Ensembl" id="ENST00000311027.9">
    <molecule id="Q8WXG6-1"/>
    <property type="protein sequence ID" value="ENSP00000310933.4"/>
    <property type="gene ID" value="ENSG00000110514.20"/>
</dbReference>
<dbReference type="Ensembl" id="ENST00000349238.7">
    <molecule id="Q8WXG6-2"/>
    <property type="protein sequence ID" value="ENSP00000304505.6"/>
    <property type="gene ID" value="ENSG00000110514.20"/>
</dbReference>
<dbReference type="Ensembl" id="ENST00000395336.7">
    <molecule id="Q8WXG6-7"/>
    <property type="protein sequence ID" value="ENSP00000378745.3"/>
    <property type="gene ID" value="ENSG00000110514.20"/>
</dbReference>
<dbReference type="Ensembl" id="ENST00000395344.7">
    <molecule id="Q8WXG6-8"/>
    <property type="protein sequence ID" value="ENSP00000378753.3"/>
    <property type="gene ID" value="ENSG00000110514.20"/>
</dbReference>
<dbReference type="Ensembl" id="ENST00000402192.6">
    <molecule id="Q8WXG6-3"/>
    <property type="protein sequence ID" value="ENSP00000384287.2"/>
    <property type="gene ID" value="ENSG00000110514.20"/>
</dbReference>
<dbReference type="Ensembl" id="ENST00000402799.5">
    <molecule id="Q8WXG6-5"/>
    <property type="protein sequence ID" value="ENSP00000385585.1"/>
    <property type="gene ID" value="ENSG00000110514.20"/>
</dbReference>
<dbReference type="Ensembl" id="ENST00000406482.5">
    <molecule id="Q8WXG6-6"/>
    <property type="protein sequence ID" value="ENSP00000384435.1"/>
    <property type="gene ID" value="ENSG00000110514.20"/>
</dbReference>
<dbReference type="Ensembl" id="ENST00000407859.7">
    <molecule id="Q8WXG6-4"/>
    <property type="protein sequence ID" value="ENSP00000384204.3"/>
    <property type="gene ID" value="ENSG00000110514.20"/>
</dbReference>
<dbReference type="GeneID" id="8567"/>
<dbReference type="KEGG" id="hsa:8567"/>
<dbReference type="UCSC" id="uc001ner.2">
    <molecule id="Q8WXG6-1"/>
    <property type="organism name" value="human"/>
</dbReference>
<dbReference type="AGR" id="HGNC:6766"/>
<dbReference type="CTD" id="8567"/>
<dbReference type="DisGeNET" id="8567"/>
<dbReference type="GeneCards" id="MADD"/>
<dbReference type="HGNC" id="HGNC:6766">
    <property type="gene designation" value="MADD"/>
</dbReference>
<dbReference type="HPA" id="ENSG00000110514">
    <property type="expression patterns" value="Tissue enhanced (brain)"/>
</dbReference>
<dbReference type="MalaCards" id="MADD"/>
<dbReference type="MIM" id="603584">
    <property type="type" value="gene+phenotype"/>
</dbReference>
<dbReference type="MIM" id="619004">
    <property type="type" value="phenotype"/>
</dbReference>
<dbReference type="MIM" id="619005">
    <property type="type" value="phenotype"/>
</dbReference>
<dbReference type="neXtProt" id="NX_Q8WXG6"/>
<dbReference type="OpenTargets" id="ENSG00000110514"/>
<dbReference type="Orphanet" id="686495">
    <property type="disease" value="MADD-related developmental delay-endocrine dysfunction-hypohemoglobinemia syndrome"/>
</dbReference>
<dbReference type="Orphanet" id="528084">
    <property type="disease" value="Non-specific syndromic intellectual disability"/>
</dbReference>
<dbReference type="PharmGKB" id="PA30523"/>
<dbReference type="VEuPathDB" id="HostDB:ENSG00000110514"/>
<dbReference type="eggNOG" id="KOG3570">
    <property type="taxonomic scope" value="Eukaryota"/>
</dbReference>
<dbReference type="GeneTree" id="ENSGT00940000156718"/>
<dbReference type="HOGENOM" id="CLU_001270_1_0_1"/>
<dbReference type="InParanoid" id="Q8WXG6"/>
<dbReference type="OMA" id="TKILCLW"/>
<dbReference type="OrthoDB" id="6282239at2759"/>
<dbReference type="PAN-GO" id="Q8WXG6">
    <property type="GO annotations" value="4 GO annotations based on evolutionary models"/>
</dbReference>
<dbReference type="PhylomeDB" id="Q8WXG6"/>
<dbReference type="TreeFam" id="TF318583"/>
<dbReference type="PathwayCommons" id="Q8WXG6"/>
<dbReference type="Reactome" id="R-HSA-5357905">
    <property type="pathway name" value="Regulation of TNFR1 signaling"/>
</dbReference>
<dbReference type="Reactome" id="R-HSA-8876198">
    <molecule id="Q8WXG6-3"/>
    <property type="pathway name" value="RAB GEFs exchange GTP for GDP on RABs"/>
</dbReference>
<dbReference type="SignaLink" id="Q8WXG6"/>
<dbReference type="SIGNOR" id="Q8WXG6"/>
<dbReference type="BioGRID-ORCS" id="8567">
    <property type="hits" value="12 hits in 1159 CRISPR screens"/>
</dbReference>
<dbReference type="CD-CODE" id="FB4E32DD">
    <property type="entry name" value="Presynaptic clusters and postsynaptic densities"/>
</dbReference>
<dbReference type="ChiTaRS" id="MADD">
    <property type="organism name" value="human"/>
</dbReference>
<dbReference type="GeneWiki" id="MADD_(gene)"/>
<dbReference type="GenomeRNAi" id="8567"/>
<dbReference type="Pharos" id="Q8WXG6">
    <property type="development level" value="Tbio"/>
</dbReference>
<dbReference type="PRO" id="PR:Q8WXG6"/>
<dbReference type="Proteomes" id="UP000005640">
    <property type="component" value="Chromosome 11"/>
</dbReference>
<dbReference type="RNAct" id="Q8WXG6">
    <property type="molecule type" value="protein"/>
</dbReference>
<dbReference type="Bgee" id="ENSG00000110514">
    <property type="expression patterns" value="Expressed in right hemisphere of cerebellum and 192 other cell types or tissues"/>
</dbReference>
<dbReference type="ExpressionAtlas" id="Q8WXG6">
    <property type="expression patterns" value="baseline and differential"/>
</dbReference>
<dbReference type="GO" id="GO:0030424">
    <property type="term" value="C:axon"/>
    <property type="evidence" value="ECO:0007669"/>
    <property type="project" value="UniProtKB-SubCell"/>
</dbReference>
<dbReference type="GO" id="GO:0005737">
    <property type="term" value="C:cytoplasm"/>
    <property type="evidence" value="ECO:0000304"/>
    <property type="project" value="ProtInc"/>
</dbReference>
<dbReference type="GO" id="GO:0005829">
    <property type="term" value="C:cytosol"/>
    <property type="evidence" value="ECO:0000314"/>
    <property type="project" value="HPA"/>
</dbReference>
<dbReference type="GO" id="GO:0016020">
    <property type="term" value="C:membrane"/>
    <property type="evidence" value="ECO:0000314"/>
    <property type="project" value="UniProtKB"/>
</dbReference>
<dbReference type="GO" id="GO:0005886">
    <property type="term" value="C:plasma membrane"/>
    <property type="evidence" value="ECO:0000314"/>
    <property type="project" value="HPA"/>
</dbReference>
<dbReference type="GO" id="GO:0005123">
    <property type="term" value="F:death receptor binding"/>
    <property type="evidence" value="ECO:0000304"/>
    <property type="project" value="ProtInc"/>
</dbReference>
<dbReference type="GO" id="GO:0005085">
    <property type="term" value="F:guanyl-nucleotide exchange factor activity"/>
    <property type="evidence" value="ECO:0000314"/>
    <property type="project" value="UniProtKB"/>
</dbReference>
<dbReference type="GO" id="GO:0030295">
    <property type="term" value="F:protein kinase activator activity"/>
    <property type="evidence" value="ECO:0000304"/>
    <property type="project" value="UniProtKB"/>
</dbReference>
<dbReference type="GO" id="GO:0007166">
    <property type="term" value="P:cell surface receptor signaling pathway"/>
    <property type="evidence" value="ECO:0000304"/>
    <property type="project" value="ProtInc"/>
</dbReference>
<dbReference type="GO" id="GO:0097194">
    <property type="term" value="P:execution phase of apoptosis"/>
    <property type="evidence" value="ECO:0000315"/>
    <property type="project" value="UniProtKB"/>
</dbReference>
<dbReference type="GO" id="GO:0043410">
    <property type="term" value="P:positive regulation of MAPK cascade"/>
    <property type="evidence" value="ECO:0000315"/>
    <property type="project" value="UniProtKB"/>
</dbReference>
<dbReference type="GO" id="GO:0042981">
    <property type="term" value="P:regulation of apoptotic process"/>
    <property type="evidence" value="ECO:0000315"/>
    <property type="project" value="UniProtKB"/>
</dbReference>
<dbReference type="GO" id="GO:0051726">
    <property type="term" value="P:regulation of cell cycle"/>
    <property type="evidence" value="ECO:0000315"/>
    <property type="project" value="UniProtKB"/>
</dbReference>
<dbReference type="GO" id="GO:2001236">
    <property type="term" value="P:regulation of extrinsic apoptotic signaling pathway"/>
    <property type="evidence" value="ECO:0000314"/>
    <property type="project" value="UniProtKB"/>
</dbReference>
<dbReference type="GO" id="GO:1902041">
    <property type="term" value="P:regulation of extrinsic apoptotic signaling pathway via death domain receptors"/>
    <property type="evidence" value="ECO:0000315"/>
    <property type="project" value="UniProtKB"/>
</dbReference>
<dbReference type="GO" id="GO:0032483">
    <property type="term" value="P:regulation of Rab protein signal transduction"/>
    <property type="evidence" value="ECO:0000314"/>
    <property type="project" value="FlyBase"/>
</dbReference>
<dbReference type="FunFam" id="3.40.50.11500:FF:000002">
    <property type="entry name" value="MAP kinase-activating death domain protein-like Protein"/>
    <property type="match status" value="1"/>
</dbReference>
<dbReference type="Gene3D" id="3.30.450.200">
    <property type="match status" value="1"/>
</dbReference>
<dbReference type="Gene3D" id="3.40.50.11500">
    <property type="match status" value="1"/>
</dbReference>
<dbReference type="InterPro" id="IPR001194">
    <property type="entry name" value="cDENN_dom"/>
</dbReference>
<dbReference type="InterPro" id="IPR005112">
    <property type="entry name" value="dDENN_dom"/>
</dbReference>
<dbReference type="InterPro" id="IPR056574">
    <property type="entry name" value="Death_MADD"/>
</dbReference>
<dbReference type="InterPro" id="IPR043153">
    <property type="entry name" value="DENN_C"/>
</dbReference>
<dbReference type="InterPro" id="IPR039980">
    <property type="entry name" value="MADD"/>
</dbReference>
<dbReference type="InterPro" id="IPR037516">
    <property type="entry name" value="Tripartite_DENN"/>
</dbReference>
<dbReference type="InterPro" id="IPR005113">
    <property type="entry name" value="uDENN_dom"/>
</dbReference>
<dbReference type="PANTHER" id="PTHR13008:SF7">
    <property type="entry name" value="MAP KINASE-ACTIVATING DEATH DOMAIN PROTEIN"/>
    <property type="match status" value="1"/>
</dbReference>
<dbReference type="PANTHER" id="PTHR13008">
    <property type="entry name" value="MAP-KINASE ACTIVATING DEATH DOMAIN PROTEIN MADD /DENN/AEX-3 C.ELEGANS"/>
    <property type="match status" value="1"/>
</dbReference>
<dbReference type="Pfam" id="PF23629">
    <property type="entry name" value="Death_MADD"/>
    <property type="match status" value="1"/>
</dbReference>
<dbReference type="Pfam" id="PF02141">
    <property type="entry name" value="DENN"/>
    <property type="match status" value="1"/>
</dbReference>
<dbReference type="Pfam" id="PF25328">
    <property type="entry name" value="PH_MADD"/>
    <property type="match status" value="1"/>
</dbReference>
<dbReference type="Pfam" id="PF03456">
    <property type="entry name" value="uDENN"/>
    <property type="match status" value="1"/>
</dbReference>
<dbReference type="SMART" id="SM00801">
    <property type="entry name" value="dDENN"/>
    <property type="match status" value="1"/>
</dbReference>
<dbReference type="SMART" id="SM00799">
    <property type="entry name" value="DENN"/>
    <property type="match status" value="1"/>
</dbReference>
<dbReference type="SMART" id="SM00800">
    <property type="entry name" value="uDENN"/>
    <property type="match status" value="1"/>
</dbReference>
<dbReference type="PROSITE" id="PS50211">
    <property type="entry name" value="DENN"/>
    <property type="match status" value="1"/>
</dbReference>
<protein>
    <recommendedName>
        <fullName>MAP kinase-activating death domain protein</fullName>
    </recommendedName>
    <alternativeName>
        <fullName>Differentially expressed in normal and neoplastic cells</fullName>
    </alternativeName>
    <alternativeName>
        <fullName>Insulinoma glucagonoma clone 20</fullName>
    </alternativeName>
    <alternativeName>
        <fullName>Rab3 GDP/GTP exchange factor</fullName>
        <shortName evidence="27">RabGEF</shortName>
    </alternativeName>
    <alternativeName>
        <fullName evidence="27">Rab3 GDP/GTP exchange protein</fullName>
        <shortName evidence="27">Rab3GEP</shortName>
    </alternativeName>
</protein>
<name>MADD_HUMAN</name>
<gene>
    <name evidence="28 33" type="primary">MADD</name>
    <name evidence="29" type="synonym">DENN</name>
    <name evidence="31" type="synonym">IG20</name>
    <name evidence="32" type="synonym">KIAA0358</name>
</gene>
<keyword id="KW-0025">Alternative splicing</keyword>
<keyword id="KW-0053">Apoptosis</keyword>
<keyword id="KW-1003">Cell membrane</keyword>
<keyword id="KW-0966">Cell projection</keyword>
<keyword id="KW-0963">Cytoplasm</keyword>
<keyword id="KW-0344">Guanine-nucleotide releasing factor</keyword>
<keyword id="KW-0991">Intellectual disability</keyword>
<keyword id="KW-0472">Membrane</keyword>
<keyword id="KW-0597">Phosphoprotein</keyword>
<keyword id="KW-1267">Proteomics identification</keyword>
<keyword id="KW-1185">Reference proteome</keyword>
<comment type="function">
    <text evidence="1 2 7 11 12 14 16">Guanyl-nucleotide exchange factor that regulates small GTPases of the Rab family (PubMed:18559336, PubMed:20937701). Converts GDP-bound inactive form of RAB27A and RAB27B to the GTP-bound active forms (PubMed:18559336, PubMed:20937701). Converts GDP-bound inactive form of RAB3A, RAB3C and RAB3D to the GTP-bound active forms, GTPases involved in synaptic vesicle exocytosis and vesicle secretion (By similarity). Plays a role in synaptic vesicle formation and in vesicle trafficking at the neuromuscular junction (By similarity). Involved in up-regulating a post-docking step of synaptic exocytosis in central synapses (By similarity). Probably by binding to the motor proteins KIF1B and KIF1A, mediates motor-dependent transport of GTP-RAB3A-positive vesicles to the presynaptic nerve terminals (By similarity). Plays a role in TNFA-mediated activation of the MAPK pathway, including ERK1/2 (PubMed:32761064). May link TNFRSF1A with MAP kinase activation (PubMed:9115275). May be involved in the regulation of TNFA-induced apoptosis (PubMed:11577081, PubMed:32761064).</text>
</comment>
<comment type="subunit">
    <text evidence="2 6 7 10 16">Interacts (via death domain) with TNFRSF1A (via death domain) (PubMed:11577081, PubMed:9115275). Interacts with PIDD1 (PubMed:10825539). Interacts with YWHAZ (PubMed:16959763). Interacts (via death domain) with KIF1B; links the motor KIF1B to Rab3-carrying vesicles in anterograde synaptic vesicle transport (By similarity). Interacts with KIF1A (By similarity). Interacts (via uDENN domain) with RAB3A, RAB3B, RAB3C and RAB3D; the GTP-bound form of the Rab proteins is preferred for interaction (By similarity).</text>
</comment>
<comment type="interaction">
    <interactant intactId="EBI-310528">
        <id>Q8WXG6</id>
    </interactant>
    <interactant intactId="EBI-752420">
        <id>Q9NUX5</id>
        <label>POT1</label>
    </interactant>
    <organismsDiffer>false</organismsDiffer>
    <experiments>2</experiments>
</comment>
<comment type="interaction">
    <interactant intactId="EBI-310528">
        <id>Q8WXG6</id>
    </interactant>
    <interactant intactId="EBI-728153">
        <id>Q16849</id>
        <label>PTPRN</label>
    </interactant>
    <organismsDiffer>false</organismsDiffer>
    <experiments>4</experiments>
</comment>
<comment type="subcellular location">
    <subcellularLocation>
        <location evidence="15">Cell membrane</location>
    </subcellularLocation>
    <subcellularLocation>
        <location evidence="15">Cytoplasm</location>
    </subcellularLocation>
    <subcellularLocation>
        <location evidence="2">Cell projection</location>
        <location evidence="2">Axon</location>
    </subcellularLocation>
</comment>
<comment type="alternative products">
    <event type="alternative splicing"/>
    <isoform>
        <id>Q8WXG6-1</id>
        <name evidence="7">1</name>
        <name evidence="7">IG20</name>
        <name evidence="8">IG20-FL</name>
        <sequence type="displayed"/>
    </isoform>
    <isoform>
        <id>Q8WXG6-2</id>
        <name evidence="7">2</name>
        <name evidence="8">IG20</name>
        <name evidence="7">IG20-PA</name>
        <name evidence="7">IG20-PASV</name>
        <sequence type="described" ref="VSP_052295 VSP_052296"/>
    </isoform>
    <isoform>
        <id>Q8WXG6-3</id>
        <name evidence="15 16 18">3</name>
        <name evidence="15 18">DENN</name>
        <name evidence="8">IG20-SV1</name>
        <name evidence="16">MADD</name>
        <sequence type="described" ref="VSP_052294 VSP_052295 VSP_055676 VSP_052296"/>
    </isoform>
    <isoform>
        <id>Q8WXG6-4</id>
        <name evidence="7 15 18">4</name>
        <name evidence="7">IG20-SV2</name>
        <sequence type="described" ref="VSP_052293 VSP_052295 VSP_052296"/>
    </isoform>
    <isoform>
        <id>Q8WXG6-5</id>
        <name evidence="7 9">5</name>
        <name evidence="9">DENN-SV</name>
        <name evidence="7">IG20-SV3</name>
        <sequence type="described" ref="VSP_052293 VSP_052294 VSP_052295 VSP_052296"/>
    </isoform>
    <isoform>
        <id>Q8WXG6-6</id>
        <name evidence="7">6</name>
        <name evidence="7">IG20-SV4</name>
        <sequence type="described" ref="VSP_052293 VSP_052294 VSP_052295 VSP_052296 VSP_052297 VSP_052298"/>
    </isoform>
    <isoform>
        <id>Q8WXG6-7</id>
        <name evidence="17">7</name>
        <name evidence="22">KIAA0358</name>
        <sequence type="described" ref="VSP_052297 VSP_052298"/>
    </isoform>
    <isoform>
        <id>Q8WXG6-8</id>
        <name>8</name>
        <sequence type="described" ref="VSP_052293 VSP_052294 VSP_052295 VSP_044848 VSP_052296"/>
    </isoform>
</comment>
<comment type="tissue specificity">
    <text evidence="15 16 18">Expressed in testis, ovary, brain and heart (PubMed:8988362). Expressed in spleen, thymus, prostate, testis, ovary, small instestine and colon (PubMed:9115275). Expressed in liver (PubMed:9796103).</text>
</comment>
<comment type="tissue specificity">
    <molecule>Isoform 1</molecule>
    <text evidence="8">Not detected in the brain, breast, kidney, lung, ovary, pancreas, testis, uterus, stomach and thyroid.</text>
</comment>
<comment type="tissue specificity">
    <molecule>Isoform 2</molecule>
    <text evidence="8">Expressed in the brain, breast, kidney, lung, ovary, pancreas, testis, uterus, stomach and thyroid.</text>
</comment>
<comment type="tissue specificity">
    <molecule>Isoform 3</molecule>
    <text evidence="8">Expressed in the brain, breast, kidney, lung, ovary, pancreas, testis, uterus, stomach and thyroid.</text>
</comment>
<comment type="tissue specificity">
    <molecule>Isoform 4</molecule>
    <text evidence="8">Expressed in the brain, breast, kidney, lung, ovary, pancreas, testis, uterus, stomach and thyroid.</text>
</comment>
<comment type="tissue specificity">
    <molecule>Isoform 5</molecule>
    <text evidence="8">Expressed in the brain, breast, kidney, lung, ovary, pancreas, testis, uterus, stomach and thyroid.</text>
</comment>
<comment type="tissue specificity">
    <molecule>Isoform 6</molecule>
    <text evidence="8">Not detected in the brain, breast, kidney, lung, ovary, pancreas, testis, uterus, stomach and thyroid.</text>
</comment>
<comment type="tissue specificity">
    <molecule>Isoform 7</molecule>
    <text evidence="8">Not detected in the brain, breast, kidney, lung, ovary, pancreas, testis, uterus, stomach and thyroid.</text>
</comment>
<comment type="developmental stage">
    <text evidence="15">Expressed in fetal brain and kidney.</text>
</comment>
<comment type="developmental stage">
    <molecule>Isoform 7</molecule>
    <text evidence="15">Expressed in fetal liver.</text>
</comment>
<comment type="disease" evidence="14">
    <disease id="DI-05908">
        <name>DEEAH syndrome</name>
        <acronym>DEEAH</acronym>
        <description>An autosomal recessive disorder characterized by moderate to severe global developmental delay, impaired intellectual development, poor or absent speech, and endocrine, pancreatic exocrine and autonomic dysfunction, as well as hematologic abnormalities. Additional features include facial dysmorphism, seizures, undescended testes, and distal skeletal anomalies. Death in early childhood may occur.</description>
        <dbReference type="MIM" id="619004"/>
    </disease>
    <text>The disease is caused by variants affecting the gene represented in this entry.</text>
</comment>
<comment type="disease" evidence="13 14">
    <disease id="DI-05909">
        <name>Neurodevelopmental disorder with dysmorphic facies, impaired speech, and hypotonia</name>
        <acronym>NEDDISH</acronym>
        <description>An autosomal recessive disorder characterized by global developmental delay, mildly to severely impaired intellectual development, poor speech and language acquisition. Some patients may have early normal development with onset of the disorder in the first years of life. More variable neurologic abnormalities include hypotonia, seizures, apnea, mild signs of autonomic or peripheral neuropathy, and autism.</description>
        <dbReference type="MIM" id="619005"/>
    </disease>
    <text>The disease is caused by variants affecting the gene represented in this entry.</text>
</comment>
<comment type="miscellaneous">
    <text evidence="16">Overexpression of MADD activates the mitogen-activated protein (MAP) kinase extracellular signal-regulated kinase (ERK). Expression of the MADD death domain stimulates both the ERK and c-JUN N-terminal kinase MAP kinases and induces the phosphorylation of cytosolic phospholipase A2.</text>
</comment>
<comment type="similarity">
    <text evidence="27">Belongs to the MADD family.</text>
</comment>
<comment type="sequence caution" evidence="27">
    <conflict type="erroneous initiation">
        <sequence resource="EMBL-CDS" id="BAA20814"/>
    </conflict>
    <text>Extended N-terminus.</text>
</comment>
<accession>Q8WXG6</accession>
<accession>A8K8S7</accession>
<accession>B5MEE5</accession>
<accession>D3DQR4</accession>
<accession>O15065</accession>
<accession>O15293</accession>
<accession>Q15732</accession>
<accession>Q15741</accession>
<accession>Q8IWD7</accession>
<accession>Q8WXG3</accession>
<accession>Q8WXG4</accession>
<accession>Q8WXG5</accession>
<accession>Q8WZ63</accession>